<sequence length="378" mass="41989">MLPLSIKDDEYKPPRLNLFRKMSGWFRSILADKTSRNLFFFLCLNLSFAFVELLYGVWSNSLGLISDSFHMFFDCTALLAGLAASVISKWRSNDAFSYGYVRAEVLAGFVNGLFLIFTAFFIFSEGVERALEPPDVHHERLLPVSILGFIVNLIGIFVFQHGGHGHSHGSGHEHSHSLFNGGLSHGHSHRGHGHSHEHKHGHTHDHGHSHGLSHGQDYCHDDHCLEGMTGSSKQILQGVFLHIVADTLGSIGVIISAILMQNYGLMIADPICSMLIALLIGVSIVPLLKESIGILMQRTPPSLENALPQCYQRVQQLQGVYSLHDPHFWTLCTDVYIGTLKLLVAPDADGRWILSQTHNIFTQAGVRQLYIQIDVAAM</sequence>
<reference key="1">
    <citation type="journal article" date="2005" name="J. Biol. Chem.">
        <title>Zinc transporters, ZnT5 and ZnT7, are required for the activation of alkaline phosphatases, zinc-requiring enzymes that are glycosylphosphatidylinositol-anchored to the cytoplasmic membrane.</title>
        <authorList>
            <person name="Suzuki T."/>
            <person name="Ishihara K."/>
            <person name="Migaki H."/>
            <person name="Matsuura W."/>
            <person name="Kohda A."/>
            <person name="Okumura K."/>
            <person name="Nagao M."/>
            <person name="Yamaguchi-Iwai Y."/>
            <person name="Kambe T."/>
        </authorList>
    </citation>
    <scope>NUCLEOTIDE SEQUENCE [MRNA]</scope>
    <scope>FUNCTION</scope>
    <scope>TRANSPORTER ACTIVITY</scope>
</reference>
<reference key="2">
    <citation type="journal article" date="2005" name="J. Biol. Chem.">
        <title>Two different zinc transport complexes of cation diffusion facilitator proteins localized in the secretory pathway operate to activate alkaline phosphatases in vertebrate cells.</title>
        <authorList>
            <person name="Suzuki T."/>
            <person name="Ishihara K."/>
            <person name="Migaki H."/>
            <person name="Ishihara K."/>
            <person name="Nagao M."/>
            <person name="Yamaguchi-Iwai Y."/>
            <person name="Kambe T."/>
        </authorList>
    </citation>
    <scope>FUNCTION</scope>
    <scope>TRANSPORTER ACTIVITY</scope>
</reference>
<reference key="3">
    <citation type="journal article" date="2006" name="J. Biol. Chem.">
        <title>Zinc transport complexes contribute to the homeostatic maintenance of secretory pathway function in vertebrate cells.</title>
        <authorList>
            <person name="Ishihara K."/>
            <person name="Yamazaki T."/>
            <person name="Ishida Y."/>
            <person name="Suzuki T."/>
            <person name="Oda K."/>
            <person name="Nagao M."/>
            <person name="Yamaguchi-Iwai Y."/>
            <person name="Kambe T."/>
        </authorList>
    </citation>
    <scope>FUNCTION</scope>
    <scope>TRANSPORTER ACTIVITY</scope>
</reference>
<keyword id="KW-0968">Cytoplasmic vesicle</keyword>
<keyword id="KW-0333">Golgi apparatus</keyword>
<keyword id="KW-0406">Ion transport</keyword>
<keyword id="KW-0472">Membrane</keyword>
<keyword id="KW-0496">Mitochondrion</keyword>
<keyword id="KW-1185">Reference proteome</keyword>
<keyword id="KW-0703">Sarcoplasmic reticulum</keyword>
<keyword id="KW-0812">Transmembrane</keyword>
<keyword id="KW-1133">Transmembrane helix</keyword>
<keyword id="KW-0813">Transport</keyword>
<keyword id="KW-0862">Zinc</keyword>
<keyword id="KW-0864">Zinc transport</keyword>
<comment type="function">
    <text evidence="6 7 8">Zinc ion transporter mediating zinc entry from the cytosol into the lumen of organelles along the secretory pathway (PubMed:15525635, PubMed:15994300, PubMed:16636052). By contributing to zinc ion homeostasis within the early secretory pathway, regulates the activation and folding of enzymes like alkaline phosphatases (PubMed:15525635, PubMed:15994300, PubMed:16636052).</text>
</comment>
<comment type="catalytic activity">
    <reaction evidence="6 7 8">
        <text>Zn(2+)(in) = Zn(2+)(out)</text>
        <dbReference type="Rhea" id="RHEA:29351"/>
        <dbReference type="ChEBI" id="CHEBI:29105"/>
    </reaction>
</comment>
<comment type="subunit">
    <text evidence="2">Homooligomer.</text>
</comment>
<comment type="subcellular location">
    <subcellularLocation>
        <location evidence="2">Golgi apparatus membrane</location>
        <topology evidence="4">Multi-pass membrane protein</topology>
    </subcellularLocation>
    <subcellularLocation>
        <location evidence="3">Cytoplasmic vesicle</location>
    </subcellularLocation>
    <subcellularLocation>
        <location evidence="3">Golgi apparatus</location>
        <location evidence="3">trans-Golgi network</location>
    </subcellularLocation>
    <subcellularLocation>
        <location evidence="1">Sarcoplasmic reticulum</location>
    </subcellularLocation>
    <subcellularLocation>
        <location evidence="1">Mitochondrion</location>
    </subcellularLocation>
</comment>
<comment type="similarity">
    <text evidence="10">Belongs to the cation diffusion facilitator (CDF) transporter (TC 2.A.4) family. SLC30A subfamily.</text>
</comment>
<accession>Q5MNV6</accession>
<gene>
    <name type="primary">SLC30A7</name>
    <name evidence="9" type="synonym">ZNT7</name>
</gene>
<dbReference type="EMBL" id="AY703477">
    <property type="protein sequence ID" value="AAV98202.1"/>
    <property type="molecule type" value="mRNA"/>
</dbReference>
<dbReference type="RefSeq" id="NP_001008788.1">
    <property type="nucleotide sequence ID" value="NM_001008788.2"/>
</dbReference>
<dbReference type="RefSeq" id="XP_046778569.1">
    <property type="nucleotide sequence ID" value="XM_046922613.1"/>
</dbReference>
<dbReference type="RefSeq" id="XP_046800379.1">
    <property type="nucleotide sequence ID" value="XM_046944423.1"/>
</dbReference>
<dbReference type="SMR" id="Q5MNV6"/>
<dbReference type="FunCoup" id="Q5MNV6">
    <property type="interactions" value="1615"/>
</dbReference>
<dbReference type="STRING" id="9031.ENSGALP00000032851"/>
<dbReference type="PaxDb" id="9031-ENSGALP00000032851"/>
<dbReference type="Ensembl" id="ENSGALT00010057609.1">
    <property type="protein sequence ID" value="ENSGALP00010034989.1"/>
    <property type="gene ID" value="ENSGALG00010023652.1"/>
</dbReference>
<dbReference type="GeneID" id="424464"/>
<dbReference type="KEGG" id="gga:424464"/>
<dbReference type="CTD" id="148867"/>
<dbReference type="VEuPathDB" id="HostDB:geneid_424464"/>
<dbReference type="eggNOG" id="KOG1484">
    <property type="taxonomic scope" value="Eukaryota"/>
</dbReference>
<dbReference type="GeneTree" id="ENSGT00940000159571"/>
<dbReference type="InParanoid" id="Q5MNV6"/>
<dbReference type="OrthoDB" id="78669at2759"/>
<dbReference type="PhylomeDB" id="Q5MNV6"/>
<dbReference type="PRO" id="PR:Q5MNV6"/>
<dbReference type="Proteomes" id="UP000000539">
    <property type="component" value="Chromosome 8"/>
</dbReference>
<dbReference type="GO" id="GO:0031410">
    <property type="term" value="C:cytoplasmic vesicle"/>
    <property type="evidence" value="ECO:0000318"/>
    <property type="project" value="GO_Central"/>
</dbReference>
<dbReference type="GO" id="GO:0005794">
    <property type="term" value="C:Golgi apparatus"/>
    <property type="evidence" value="ECO:0000318"/>
    <property type="project" value="GO_Central"/>
</dbReference>
<dbReference type="GO" id="GO:1990674">
    <property type="term" value="C:Golgi cis cisterna membrane"/>
    <property type="evidence" value="ECO:0000250"/>
    <property type="project" value="UniProtKB"/>
</dbReference>
<dbReference type="GO" id="GO:0000139">
    <property type="term" value="C:Golgi membrane"/>
    <property type="evidence" value="ECO:0007669"/>
    <property type="project" value="UniProtKB-SubCell"/>
</dbReference>
<dbReference type="GO" id="GO:0005739">
    <property type="term" value="C:mitochondrion"/>
    <property type="evidence" value="ECO:0000250"/>
    <property type="project" value="UniProtKB"/>
</dbReference>
<dbReference type="GO" id="GO:0048471">
    <property type="term" value="C:perinuclear region of cytoplasm"/>
    <property type="evidence" value="ECO:0007669"/>
    <property type="project" value="Ensembl"/>
</dbReference>
<dbReference type="GO" id="GO:0033017">
    <property type="term" value="C:sarcoplasmic reticulum membrane"/>
    <property type="evidence" value="ECO:0000250"/>
    <property type="project" value="UniProtKB"/>
</dbReference>
<dbReference type="GO" id="GO:0042802">
    <property type="term" value="F:identical protein binding"/>
    <property type="evidence" value="ECO:0007669"/>
    <property type="project" value="Ensembl"/>
</dbReference>
<dbReference type="GO" id="GO:0005385">
    <property type="term" value="F:zinc ion transmembrane transporter activity"/>
    <property type="evidence" value="ECO:0000314"/>
    <property type="project" value="UniProtKB"/>
</dbReference>
<dbReference type="GO" id="GO:0006882">
    <property type="term" value="P:intracellular zinc ion homeostasis"/>
    <property type="evidence" value="ECO:0000318"/>
    <property type="project" value="GO_Central"/>
</dbReference>
<dbReference type="GO" id="GO:1904257">
    <property type="term" value="P:zinc ion import into Golgi lumen"/>
    <property type="evidence" value="ECO:0000314"/>
    <property type="project" value="UniProtKB"/>
</dbReference>
<dbReference type="Gene3D" id="1.20.1510.10">
    <property type="entry name" value="Cation efflux protein transmembrane domain"/>
    <property type="match status" value="1"/>
</dbReference>
<dbReference type="InterPro" id="IPR002524">
    <property type="entry name" value="Cation_efflux"/>
</dbReference>
<dbReference type="InterPro" id="IPR027469">
    <property type="entry name" value="Cation_efflux_TMD_sf"/>
</dbReference>
<dbReference type="InterPro" id="IPR045316">
    <property type="entry name" value="Msc2-like"/>
</dbReference>
<dbReference type="NCBIfam" id="TIGR01297">
    <property type="entry name" value="CDF"/>
    <property type="match status" value="1"/>
</dbReference>
<dbReference type="PANTHER" id="PTHR45755">
    <property type="match status" value="1"/>
</dbReference>
<dbReference type="PANTHER" id="PTHR45755:SF4">
    <property type="entry name" value="ZINC TRANSPORTER 7"/>
    <property type="match status" value="1"/>
</dbReference>
<dbReference type="Pfam" id="PF01545">
    <property type="entry name" value="Cation_efflux"/>
    <property type="match status" value="1"/>
</dbReference>
<dbReference type="SUPFAM" id="SSF161111">
    <property type="entry name" value="Cation efflux protein transmembrane domain-like"/>
    <property type="match status" value="1"/>
</dbReference>
<feature type="chain" id="PRO_0000314302" description="Zinc transporter 7">
    <location>
        <begin position="1"/>
        <end position="378"/>
    </location>
</feature>
<feature type="topological domain" description="Cytoplasmic" evidence="10">
    <location>
        <begin position="1"/>
        <end position="37"/>
    </location>
</feature>
<feature type="transmembrane region" description="Helical" evidence="4">
    <location>
        <begin position="38"/>
        <end position="58"/>
    </location>
</feature>
<feature type="topological domain" description="Lumenal" evidence="10">
    <location>
        <begin position="59"/>
        <end position="67"/>
    </location>
</feature>
<feature type="transmembrane region" description="Helical" evidence="4">
    <location>
        <begin position="68"/>
        <end position="88"/>
    </location>
</feature>
<feature type="topological domain" description="Cytoplasmic" evidence="10">
    <location>
        <begin position="89"/>
        <end position="102"/>
    </location>
</feature>
<feature type="transmembrane region" description="Helical" evidence="4">
    <location>
        <begin position="103"/>
        <end position="123"/>
    </location>
</feature>
<feature type="topological domain" description="Lumenal" evidence="10">
    <location>
        <begin position="124"/>
        <end position="140"/>
    </location>
</feature>
<feature type="transmembrane region" description="Helical" evidence="4">
    <location>
        <begin position="141"/>
        <end position="161"/>
    </location>
</feature>
<feature type="topological domain" description="Cytoplasmic" evidence="10">
    <location>
        <begin position="162"/>
        <end position="238"/>
    </location>
</feature>
<feature type="transmembrane region" description="Helical" evidence="4">
    <location>
        <begin position="239"/>
        <end position="259"/>
    </location>
</feature>
<feature type="topological domain" description="Lumenal" evidence="10">
    <location>
        <begin position="260"/>
        <end position="264"/>
    </location>
</feature>
<feature type="transmembrane region" description="Helical" evidence="4">
    <location>
        <begin position="265"/>
        <end position="285"/>
    </location>
</feature>
<feature type="topological domain" description="Cytoplasmic" evidence="10">
    <location>
        <begin position="286"/>
        <end position="378"/>
    </location>
</feature>
<feature type="region of interest" description="His-rich loop">
    <location>
        <begin position="161"/>
        <end position="223"/>
    </location>
</feature>
<feature type="region of interest" description="Disordered" evidence="5">
    <location>
        <begin position="185"/>
        <end position="214"/>
    </location>
</feature>
<feature type="compositionally biased region" description="Basic residues" evidence="5">
    <location>
        <begin position="186"/>
        <end position="211"/>
    </location>
</feature>
<proteinExistence type="evidence at transcript level"/>
<protein>
    <recommendedName>
        <fullName evidence="11">Zinc transporter 7</fullName>
    </recommendedName>
    <alternativeName>
        <fullName>Solute carrier family 30 member 7</fullName>
    </alternativeName>
</protein>
<organism>
    <name type="scientific">Gallus gallus</name>
    <name type="common">Chicken</name>
    <dbReference type="NCBI Taxonomy" id="9031"/>
    <lineage>
        <taxon>Eukaryota</taxon>
        <taxon>Metazoa</taxon>
        <taxon>Chordata</taxon>
        <taxon>Craniata</taxon>
        <taxon>Vertebrata</taxon>
        <taxon>Euteleostomi</taxon>
        <taxon>Archelosauria</taxon>
        <taxon>Archosauria</taxon>
        <taxon>Dinosauria</taxon>
        <taxon>Saurischia</taxon>
        <taxon>Theropoda</taxon>
        <taxon>Coelurosauria</taxon>
        <taxon>Aves</taxon>
        <taxon>Neognathae</taxon>
        <taxon>Galloanserae</taxon>
        <taxon>Galliformes</taxon>
        <taxon>Phasianidae</taxon>
        <taxon>Phasianinae</taxon>
        <taxon>Gallus</taxon>
    </lineage>
</organism>
<evidence type="ECO:0000250" key="1">
    <source>
        <dbReference type="UniProtKB" id="Q5BJM8"/>
    </source>
</evidence>
<evidence type="ECO:0000250" key="2">
    <source>
        <dbReference type="UniProtKB" id="Q8NEW0"/>
    </source>
</evidence>
<evidence type="ECO:0000250" key="3">
    <source>
        <dbReference type="UniProtKB" id="Q9JKN1"/>
    </source>
</evidence>
<evidence type="ECO:0000255" key="4"/>
<evidence type="ECO:0000256" key="5">
    <source>
        <dbReference type="SAM" id="MobiDB-lite"/>
    </source>
</evidence>
<evidence type="ECO:0000269" key="6">
    <source>
    </source>
</evidence>
<evidence type="ECO:0000269" key="7">
    <source>
    </source>
</evidence>
<evidence type="ECO:0000269" key="8">
    <source>
    </source>
</evidence>
<evidence type="ECO:0000303" key="9">
    <source>
    </source>
</evidence>
<evidence type="ECO:0000305" key="10"/>
<evidence type="ECO:0000305" key="11">
    <source>
    </source>
</evidence>
<name>ZNT7_CHICK</name>